<accession>Q8RBR1</accession>
<sequence>MKTPRPYLEHILQECEFLIERVKGISFEDFVKDPVLTRAFVRSLEIIGEAVKNLPKEFREKHSKVPWKEIAGMRDKLIHEYFGVNYRIIWETILKEIPELEKQVKEILQKEK</sequence>
<feature type="chain" id="PRO_0000158261" description="Putative RNase TTE0752">
    <location>
        <begin position="1"/>
        <end position="112"/>
    </location>
</feature>
<feature type="short sequence motif" description="RX(4)HXY motif" evidence="1">
    <location>
        <begin position="74"/>
        <end position="81"/>
    </location>
</feature>
<feature type="active site" evidence="1">
    <location>
        <position position="74"/>
    </location>
</feature>
<feature type="active site" evidence="1">
    <location>
        <position position="79"/>
    </location>
</feature>
<feature type="modified residue" description="O-di-AMP-tyrosine" evidence="1">
    <location>
        <position position="81"/>
    </location>
</feature>
<comment type="function">
    <text evidence="2">Probable toxic component of a putative type VII toxin-antitoxin (TA) system, probably an RNase. Probably neutralized by cognate antitoxin TTE0751. Neutralization may be due to AMPylation by TTE0751.</text>
</comment>
<comment type="subunit">
    <text evidence="2">Homodimer, probably forms a complex with cognate antitoxin TTE0751.</text>
</comment>
<comment type="PTM">
    <text evidence="1">Modified by cognate antitoxin TTE0751; probably at least 2 successive AMPylation events occur on Tyr-81.</text>
</comment>
<comment type="similarity">
    <text evidence="3">Belongs to the HepT RNase toxin family.</text>
</comment>
<organism>
    <name type="scientific">Caldanaerobacter subterraneus subsp. tengcongensis (strain DSM 15242 / JCM 11007 / NBRC 100824 / MB4)</name>
    <name type="common">Thermoanaerobacter tengcongensis</name>
    <dbReference type="NCBI Taxonomy" id="273068"/>
    <lineage>
        <taxon>Bacteria</taxon>
        <taxon>Bacillati</taxon>
        <taxon>Bacillota</taxon>
        <taxon>Clostridia</taxon>
        <taxon>Thermoanaerobacterales</taxon>
        <taxon>Thermoanaerobacteraceae</taxon>
        <taxon>Caldanaerobacter</taxon>
    </lineage>
</organism>
<proteinExistence type="inferred from homology"/>
<name>Y752_CALS4</name>
<reference key="1">
    <citation type="journal article" date="2002" name="Genome Res.">
        <title>A complete sequence of the T. tengcongensis genome.</title>
        <authorList>
            <person name="Bao Q."/>
            <person name="Tian Y."/>
            <person name="Li W."/>
            <person name="Xu Z."/>
            <person name="Xuan Z."/>
            <person name="Hu S."/>
            <person name="Dong W."/>
            <person name="Yang J."/>
            <person name="Chen Y."/>
            <person name="Xue Y."/>
            <person name="Xu Y."/>
            <person name="Lai X."/>
            <person name="Huang L."/>
            <person name="Dong X."/>
            <person name="Ma Y."/>
            <person name="Ling L."/>
            <person name="Tan H."/>
            <person name="Chen R."/>
            <person name="Wang J."/>
            <person name="Yu J."/>
            <person name="Yang H."/>
        </authorList>
    </citation>
    <scope>NUCLEOTIDE SEQUENCE [LARGE SCALE GENOMIC DNA]</scope>
    <source>
        <strain>DSM 15242 / JCM 11007 / NBRC 100824 / MB4</strain>
    </source>
</reference>
<gene>
    <name type="ordered locus">TTE0752</name>
</gene>
<evidence type="ECO:0000250" key="1">
    <source>
        <dbReference type="UniProtKB" id="A0A0B0QJR1"/>
    </source>
</evidence>
<evidence type="ECO:0000250" key="2">
    <source>
        <dbReference type="UniProtKB" id="Q8ECH6"/>
    </source>
</evidence>
<evidence type="ECO:0000305" key="3"/>
<dbReference type="EC" id="3.1.-.-" evidence="2"/>
<dbReference type="EMBL" id="AE008691">
    <property type="protein sequence ID" value="AAM24012.1"/>
    <property type="molecule type" value="Genomic_DNA"/>
</dbReference>
<dbReference type="RefSeq" id="WP_011025150.1">
    <property type="nucleotide sequence ID" value="NZ_JANUCV010000001.1"/>
</dbReference>
<dbReference type="SMR" id="Q8RBR1"/>
<dbReference type="STRING" id="273068.TTE0752"/>
<dbReference type="KEGG" id="tte:TTE0752"/>
<dbReference type="eggNOG" id="COG2361">
    <property type="taxonomic scope" value="Bacteria"/>
</dbReference>
<dbReference type="HOGENOM" id="CLU_142825_3_3_9"/>
<dbReference type="OrthoDB" id="9810538at2"/>
<dbReference type="Proteomes" id="UP000000555">
    <property type="component" value="Chromosome"/>
</dbReference>
<dbReference type="GO" id="GO:0110001">
    <property type="term" value="C:toxin-antitoxin complex"/>
    <property type="evidence" value="ECO:0007669"/>
    <property type="project" value="InterPro"/>
</dbReference>
<dbReference type="GO" id="GO:0000166">
    <property type="term" value="F:nucleotide binding"/>
    <property type="evidence" value="ECO:0007669"/>
    <property type="project" value="UniProtKB-KW"/>
</dbReference>
<dbReference type="GO" id="GO:0004540">
    <property type="term" value="F:RNA nuclease activity"/>
    <property type="evidence" value="ECO:0007669"/>
    <property type="project" value="InterPro"/>
</dbReference>
<dbReference type="Gene3D" id="1.20.120.580">
    <property type="entry name" value="bsu32300-like"/>
    <property type="match status" value="1"/>
</dbReference>
<dbReference type="InterPro" id="IPR008201">
    <property type="entry name" value="HepT-like"/>
</dbReference>
<dbReference type="InterPro" id="IPR037038">
    <property type="entry name" value="HepT-like_sf"/>
</dbReference>
<dbReference type="InterPro" id="IPR051813">
    <property type="entry name" value="HepT_RNase_toxin"/>
</dbReference>
<dbReference type="PANTHER" id="PTHR34139:SF1">
    <property type="entry name" value="RNASE MJ1380-RELATED"/>
    <property type="match status" value="1"/>
</dbReference>
<dbReference type="PANTHER" id="PTHR34139">
    <property type="entry name" value="UPF0331 PROTEIN MJ0127"/>
    <property type="match status" value="1"/>
</dbReference>
<dbReference type="Pfam" id="PF01934">
    <property type="entry name" value="HepT-like"/>
    <property type="match status" value="1"/>
</dbReference>
<keyword id="KW-0378">Hydrolase</keyword>
<keyword id="KW-0540">Nuclease</keyword>
<keyword id="KW-0547">Nucleotide-binding</keyword>
<keyword id="KW-0597">Phosphoprotein</keyword>
<keyword id="KW-1185">Reference proteome</keyword>
<keyword id="KW-1277">Toxin-antitoxin system</keyword>
<protein>
    <recommendedName>
        <fullName>Putative RNase TTE0752</fullName>
        <ecNumber evidence="2">3.1.-.-</ecNumber>
    </recommendedName>
    <alternativeName>
        <fullName>Putative toxin TTE0752</fullName>
    </alternativeName>
</protein>